<gene>
    <name evidence="1" type="primary">recO</name>
    <name type="ordered locus">RC1_1482</name>
</gene>
<feature type="chain" id="PRO_1000099402" description="DNA repair protein RecO">
    <location>
        <begin position="1"/>
        <end position="250"/>
    </location>
</feature>
<dbReference type="EMBL" id="CP000613">
    <property type="protein sequence ID" value="ACI98886.1"/>
    <property type="molecule type" value="Genomic_DNA"/>
</dbReference>
<dbReference type="RefSeq" id="WP_012566673.1">
    <property type="nucleotide sequence ID" value="NC_011420.2"/>
</dbReference>
<dbReference type="SMR" id="B6IMY9"/>
<dbReference type="STRING" id="414684.RC1_1482"/>
<dbReference type="KEGG" id="rce:RC1_1482"/>
<dbReference type="eggNOG" id="COG1381">
    <property type="taxonomic scope" value="Bacteria"/>
</dbReference>
<dbReference type="HOGENOM" id="CLU_086029_0_0_5"/>
<dbReference type="OrthoDB" id="9804792at2"/>
<dbReference type="Proteomes" id="UP000001591">
    <property type="component" value="Chromosome"/>
</dbReference>
<dbReference type="GO" id="GO:0043590">
    <property type="term" value="C:bacterial nucleoid"/>
    <property type="evidence" value="ECO:0007669"/>
    <property type="project" value="TreeGrafter"/>
</dbReference>
<dbReference type="GO" id="GO:0006310">
    <property type="term" value="P:DNA recombination"/>
    <property type="evidence" value="ECO:0007669"/>
    <property type="project" value="UniProtKB-UniRule"/>
</dbReference>
<dbReference type="GO" id="GO:0006302">
    <property type="term" value="P:double-strand break repair"/>
    <property type="evidence" value="ECO:0007669"/>
    <property type="project" value="TreeGrafter"/>
</dbReference>
<dbReference type="Gene3D" id="2.40.50.140">
    <property type="entry name" value="Nucleic acid-binding proteins"/>
    <property type="match status" value="1"/>
</dbReference>
<dbReference type="Gene3D" id="1.20.1440.120">
    <property type="entry name" value="Recombination protein O, C-terminal domain"/>
    <property type="match status" value="1"/>
</dbReference>
<dbReference type="HAMAP" id="MF_00201">
    <property type="entry name" value="RecO"/>
    <property type="match status" value="1"/>
</dbReference>
<dbReference type="InterPro" id="IPR037278">
    <property type="entry name" value="ARFGAP/RecO"/>
</dbReference>
<dbReference type="InterPro" id="IPR022572">
    <property type="entry name" value="DNA_rep/recomb_RecO_N"/>
</dbReference>
<dbReference type="InterPro" id="IPR012340">
    <property type="entry name" value="NA-bd_OB-fold"/>
</dbReference>
<dbReference type="InterPro" id="IPR003717">
    <property type="entry name" value="RecO"/>
</dbReference>
<dbReference type="InterPro" id="IPR042242">
    <property type="entry name" value="RecO_C"/>
</dbReference>
<dbReference type="NCBIfam" id="TIGR00613">
    <property type="entry name" value="reco"/>
    <property type="match status" value="1"/>
</dbReference>
<dbReference type="PANTHER" id="PTHR33991">
    <property type="entry name" value="DNA REPAIR PROTEIN RECO"/>
    <property type="match status" value="1"/>
</dbReference>
<dbReference type="PANTHER" id="PTHR33991:SF1">
    <property type="entry name" value="DNA REPAIR PROTEIN RECO"/>
    <property type="match status" value="1"/>
</dbReference>
<dbReference type="Pfam" id="PF02565">
    <property type="entry name" value="RecO_C"/>
    <property type="match status" value="1"/>
</dbReference>
<dbReference type="Pfam" id="PF11967">
    <property type="entry name" value="RecO_N"/>
    <property type="match status" value="1"/>
</dbReference>
<dbReference type="SUPFAM" id="SSF57863">
    <property type="entry name" value="ArfGap/RecO-like zinc finger"/>
    <property type="match status" value="1"/>
</dbReference>
<dbReference type="SUPFAM" id="SSF50249">
    <property type="entry name" value="Nucleic acid-binding proteins"/>
    <property type="match status" value="1"/>
</dbReference>
<sequence>MEWTDDAIVLSARPHGETAALAVLLTRGHGRHAGLVHGGQSGRMRPVLEPGNRVAARWAARLVEQLGTLALELERATAAGLLEDPLRLAALSSACALVDAALPEREPHPALFDATLALFDALQTEVWAEIYVRWEIGLLEEAGFGLDFGSCAATGITDNDQLAYVSPRTGRAVSLSAGEPYRDRLLALPPFLVGRSAGGAEEVVQGLALTGHFLDRHLFALRHAEVPAARTRFVDRYRKAHTTSGITPAP</sequence>
<reference key="1">
    <citation type="submission" date="2007-03" db="EMBL/GenBank/DDBJ databases">
        <title>Genome sequence of Rhodospirillum centenum.</title>
        <authorList>
            <person name="Touchman J.W."/>
            <person name="Bauer C."/>
            <person name="Blankenship R.E."/>
        </authorList>
    </citation>
    <scope>NUCLEOTIDE SEQUENCE [LARGE SCALE GENOMIC DNA]</scope>
    <source>
        <strain>ATCC 51521 / SW</strain>
    </source>
</reference>
<protein>
    <recommendedName>
        <fullName evidence="1">DNA repair protein RecO</fullName>
    </recommendedName>
    <alternativeName>
        <fullName evidence="1">Recombination protein O</fullName>
    </alternativeName>
</protein>
<name>RECO_RHOCS</name>
<proteinExistence type="inferred from homology"/>
<organism>
    <name type="scientific">Rhodospirillum centenum (strain ATCC 51521 / SW)</name>
    <dbReference type="NCBI Taxonomy" id="414684"/>
    <lineage>
        <taxon>Bacteria</taxon>
        <taxon>Pseudomonadati</taxon>
        <taxon>Pseudomonadota</taxon>
        <taxon>Alphaproteobacteria</taxon>
        <taxon>Rhodospirillales</taxon>
        <taxon>Rhodospirillaceae</taxon>
        <taxon>Rhodospirillum</taxon>
    </lineage>
</organism>
<evidence type="ECO:0000255" key="1">
    <source>
        <dbReference type="HAMAP-Rule" id="MF_00201"/>
    </source>
</evidence>
<accession>B6IMY9</accession>
<comment type="function">
    <text evidence="1">Involved in DNA repair and RecF pathway recombination.</text>
</comment>
<comment type="similarity">
    <text evidence="1">Belongs to the RecO family.</text>
</comment>
<keyword id="KW-0227">DNA damage</keyword>
<keyword id="KW-0233">DNA recombination</keyword>
<keyword id="KW-0234">DNA repair</keyword>
<keyword id="KW-1185">Reference proteome</keyword>